<comment type="function">
    <text evidence="4">Regulator of the mitotic function of yeast type 1 protein phosphatase.</text>
</comment>
<comment type="subunit">
    <text evidence="3">Interacts with YPI1.</text>
</comment>
<comment type="interaction">
    <interactant intactId="EBI-16783">
        <id>P36047</id>
    </interactant>
    <interactant intactId="EBI-13715">
        <id>P32598</id>
        <label>GLC7</label>
    </interactant>
    <organismsDiffer>false</organismsDiffer>
    <experiments>16</experiments>
</comment>
<comment type="interaction">
    <interactant intactId="EBI-16783">
        <id>P36047</id>
    </interactant>
    <interactant intactId="EBI-13787">
        <id>P32945</id>
        <label>PPQ1</label>
    </interactant>
    <organismsDiffer>false</organismsDiffer>
    <experiments>4</experiments>
</comment>
<comment type="interaction">
    <interactant intactId="EBI-16783">
        <id>P36047</id>
    </interactant>
    <interactant intactId="EBI-22913">
        <id>P43587</id>
        <label>YPI1</label>
    </interactant>
    <organismsDiffer>false</organismsDiffer>
    <experiments>10</experiments>
</comment>
<comment type="subcellular location">
    <subcellularLocation>
        <location evidence="1">Nucleus</location>
    </subcellularLocation>
</comment>
<comment type="miscellaneous">
    <text evidence="2">Present with 3870 molecules/cell in log phase SD medium.</text>
</comment>
<comment type="similarity">
    <text evidence="4">Belongs to the SDS22 family.</text>
</comment>
<sequence>MDKNSVNKDSEEKDERHKIEVVDDTNPDFITADSELTQDLPDDVEVIDLVHLKIKSLEDLNLYRFKNLKQLCLRQNLIESISEVEVLPHDKIVDLDFYDNKIKHISSNVNKLTKLTSLDLSFNKIKHIKNLENLTDLENLYFVQNSISKIENLSTLKSLKNLELGGNKVHSIEPDSFEGLSNLEEIWLGKNSIPRLINLHPLKNLKILSIQSNKLKKIENLEELTNLEELYLSHNFITKIEGLEKNLKLTTLDVTSNKITSLENLNHLSNLTDIWASFNKIDQSFESLGENLSALSRLETIYLEGNPIQLENKTSYRRKLTMNLPPSLQKIDATYIRG</sequence>
<protein>
    <recommendedName>
        <fullName>Protein phosphatase 1 regulatory subunit SDS22</fullName>
    </recommendedName>
</protein>
<gene>
    <name type="primary">SDS22</name>
    <name type="synonym">EGP1</name>
    <name type="ordered locus">YKL193C</name>
</gene>
<accession>P36047</accession>
<accession>D6VX07</accession>
<proteinExistence type="evidence at protein level"/>
<dbReference type="EMBL" id="X83609">
    <property type="protein sequence ID" value="CAA58588.1"/>
    <property type="molecule type" value="Genomic_DNA"/>
</dbReference>
<dbReference type="EMBL" id="Z28193">
    <property type="protein sequence ID" value="CAA82037.1"/>
    <property type="molecule type" value="Genomic_DNA"/>
</dbReference>
<dbReference type="EMBL" id="AY558314">
    <property type="protein sequence ID" value="AAS56640.1"/>
    <property type="molecule type" value="Genomic_DNA"/>
</dbReference>
<dbReference type="EMBL" id="X69765">
    <property type="status" value="NOT_ANNOTATED_CDS"/>
    <property type="molecule type" value="Genomic_DNA"/>
</dbReference>
<dbReference type="EMBL" id="BK006944">
    <property type="protein sequence ID" value="DAA08973.1"/>
    <property type="molecule type" value="Genomic_DNA"/>
</dbReference>
<dbReference type="PIR" id="S38030">
    <property type="entry name" value="S38030"/>
</dbReference>
<dbReference type="RefSeq" id="NP_012728.1">
    <property type="nucleotide sequence ID" value="NM_001179759.1"/>
</dbReference>
<dbReference type="SMR" id="P36047"/>
<dbReference type="BioGRID" id="33928">
    <property type="interactions" value="179"/>
</dbReference>
<dbReference type="ComplexPortal" id="CPX-1249">
    <property type="entry name" value="SDS22-GLC7 phosphatase complex"/>
</dbReference>
<dbReference type="ComplexPortal" id="CPX-1260">
    <property type="entry name" value="SDS22-GLC7-YPI1 phosphatase complex"/>
</dbReference>
<dbReference type="DIP" id="DIP-2378N"/>
<dbReference type="FunCoup" id="P36047">
    <property type="interactions" value="414"/>
</dbReference>
<dbReference type="IntAct" id="P36047">
    <property type="interactions" value="42"/>
</dbReference>
<dbReference type="MINT" id="P36047"/>
<dbReference type="STRING" id="4932.YKL193C"/>
<dbReference type="iPTMnet" id="P36047"/>
<dbReference type="PaxDb" id="4932-YKL193C"/>
<dbReference type="PeptideAtlas" id="P36047"/>
<dbReference type="TopDownProteomics" id="P36047"/>
<dbReference type="EnsemblFungi" id="YKL193C_mRNA">
    <property type="protein sequence ID" value="YKL193C"/>
    <property type="gene ID" value="YKL193C"/>
</dbReference>
<dbReference type="GeneID" id="853641"/>
<dbReference type="KEGG" id="sce:YKL193C"/>
<dbReference type="AGR" id="SGD:S000001676"/>
<dbReference type="SGD" id="S000001676">
    <property type="gene designation" value="SDS22"/>
</dbReference>
<dbReference type="VEuPathDB" id="FungiDB:YKL193C"/>
<dbReference type="eggNOG" id="KOG0531">
    <property type="taxonomic scope" value="Eukaryota"/>
</dbReference>
<dbReference type="GeneTree" id="ENSGT00940000162473"/>
<dbReference type="HOGENOM" id="CLU_044236_0_0_1"/>
<dbReference type="InParanoid" id="P36047"/>
<dbReference type="OMA" id="EVWASYN"/>
<dbReference type="OrthoDB" id="266138at2759"/>
<dbReference type="BioCyc" id="YEAST:G3O-31955-MONOMER"/>
<dbReference type="BioGRID-ORCS" id="853641">
    <property type="hits" value="0 hits in 10 CRISPR screens"/>
</dbReference>
<dbReference type="PRO" id="PR:P36047"/>
<dbReference type="Proteomes" id="UP000002311">
    <property type="component" value="Chromosome XI"/>
</dbReference>
<dbReference type="RNAct" id="P36047">
    <property type="molecule type" value="protein"/>
</dbReference>
<dbReference type="GO" id="GO:0005737">
    <property type="term" value="C:cytoplasm"/>
    <property type="evidence" value="ECO:0007005"/>
    <property type="project" value="SGD"/>
</dbReference>
<dbReference type="GO" id="GO:0005634">
    <property type="term" value="C:nucleus"/>
    <property type="evidence" value="ECO:0000314"/>
    <property type="project" value="ComplexPortal"/>
</dbReference>
<dbReference type="GO" id="GO:0000164">
    <property type="term" value="C:protein phosphatase type 1 complex"/>
    <property type="evidence" value="ECO:0000314"/>
    <property type="project" value="SGD"/>
</dbReference>
<dbReference type="GO" id="GO:0072542">
    <property type="term" value="F:protein phosphatase activator activity"/>
    <property type="evidence" value="ECO:0000316"/>
    <property type="project" value="SGD"/>
</dbReference>
<dbReference type="GO" id="GO:0004865">
    <property type="term" value="F:protein serine/threonine phosphatase inhibitor activity"/>
    <property type="evidence" value="ECO:0000315"/>
    <property type="project" value="SGD"/>
</dbReference>
<dbReference type="GO" id="GO:0051301">
    <property type="term" value="P:cell division"/>
    <property type="evidence" value="ECO:0007669"/>
    <property type="project" value="UniProtKB-KW"/>
</dbReference>
<dbReference type="GO" id="GO:0051276">
    <property type="term" value="P:chromosome organization"/>
    <property type="evidence" value="ECO:0000303"/>
    <property type="project" value="ComplexPortal"/>
</dbReference>
<dbReference type="GO" id="GO:0007059">
    <property type="term" value="P:chromosome segregation"/>
    <property type="evidence" value="ECO:0000315"/>
    <property type="project" value="SGD"/>
</dbReference>
<dbReference type="GO" id="GO:0051457">
    <property type="term" value="P:maintenance of protein location in nucleus"/>
    <property type="evidence" value="ECO:0000315"/>
    <property type="project" value="SGD"/>
</dbReference>
<dbReference type="FunFam" id="3.80.10.10:FF:000055">
    <property type="entry name" value="Protein phosphatase 1 regulatory subunit 7"/>
    <property type="match status" value="1"/>
</dbReference>
<dbReference type="Gene3D" id="3.80.10.10">
    <property type="entry name" value="Ribonuclease Inhibitor"/>
    <property type="match status" value="3"/>
</dbReference>
<dbReference type="InterPro" id="IPR050576">
    <property type="entry name" value="Cilia_flagella_integrity"/>
</dbReference>
<dbReference type="InterPro" id="IPR001611">
    <property type="entry name" value="Leu-rich_rpt"/>
</dbReference>
<dbReference type="InterPro" id="IPR025875">
    <property type="entry name" value="Leu-rich_rpt_4"/>
</dbReference>
<dbReference type="InterPro" id="IPR003591">
    <property type="entry name" value="Leu-rich_rpt_typical-subtyp"/>
</dbReference>
<dbReference type="InterPro" id="IPR032675">
    <property type="entry name" value="LRR_dom_sf"/>
</dbReference>
<dbReference type="PANTHER" id="PTHR45973:SF23">
    <property type="entry name" value="PROTEIN PHOSPHATASE 1 REGULATORY SUBUNIT 7"/>
    <property type="match status" value="1"/>
</dbReference>
<dbReference type="PANTHER" id="PTHR45973">
    <property type="entry name" value="PROTEIN PHOSPHATASE 1 REGULATORY SUBUNIT SDS22-RELATED"/>
    <property type="match status" value="1"/>
</dbReference>
<dbReference type="Pfam" id="PF12799">
    <property type="entry name" value="LRR_4"/>
    <property type="match status" value="1"/>
</dbReference>
<dbReference type="Pfam" id="PF14580">
    <property type="entry name" value="LRR_9"/>
    <property type="match status" value="1"/>
</dbReference>
<dbReference type="SMART" id="SM00365">
    <property type="entry name" value="LRR_SD22"/>
    <property type="match status" value="12"/>
</dbReference>
<dbReference type="SMART" id="SM00369">
    <property type="entry name" value="LRR_TYP"/>
    <property type="match status" value="4"/>
</dbReference>
<dbReference type="SUPFAM" id="SSF52058">
    <property type="entry name" value="L domain-like"/>
    <property type="match status" value="1"/>
</dbReference>
<dbReference type="PROSITE" id="PS51450">
    <property type="entry name" value="LRR"/>
    <property type="match status" value="12"/>
</dbReference>
<feature type="chain" id="PRO_0000071447" description="Protein phosphatase 1 regulatory subunit SDS22">
    <location>
        <begin position="1"/>
        <end position="338"/>
    </location>
</feature>
<feature type="repeat" description="LRR 1">
    <location>
        <begin position="43"/>
        <end position="64"/>
    </location>
</feature>
<feature type="repeat" description="LRR 2">
    <location>
        <begin position="67"/>
        <end position="88"/>
    </location>
</feature>
<feature type="repeat" description="LRR 3">
    <location>
        <begin position="91"/>
        <end position="113"/>
    </location>
</feature>
<feature type="repeat" description="LRR 4">
    <location>
        <begin position="114"/>
        <end position="135"/>
    </location>
</feature>
<feature type="repeat" description="LRR 5">
    <location>
        <begin position="136"/>
        <end position="157"/>
    </location>
</feature>
<feature type="repeat" description="LRR 6">
    <location>
        <begin position="158"/>
        <end position="179"/>
    </location>
</feature>
<feature type="repeat" description="LRR 7">
    <location>
        <begin position="182"/>
        <end position="203"/>
    </location>
</feature>
<feature type="repeat" description="LRR 8">
    <location>
        <begin position="204"/>
        <end position="225"/>
    </location>
</feature>
<feature type="repeat" description="LRR 9">
    <location>
        <begin position="226"/>
        <end position="247"/>
    </location>
</feature>
<feature type="repeat" description="LRR 10">
    <location>
        <begin position="248"/>
        <end position="269"/>
    </location>
</feature>
<feature type="repeat" description="LRR 11">
    <location>
        <begin position="270"/>
        <end position="292"/>
    </location>
</feature>
<feature type="domain" description="LRRCT">
    <location>
        <begin position="306"/>
        <end position="338"/>
    </location>
</feature>
<feature type="modified residue" description="Phosphoserine" evidence="5 6">
    <location>
        <position position="56"/>
    </location>
</feature>
<keyword id="KW-0131">Cell cycle</keyword>
<keyword id="KW-0132">Cell division</keyword>
<keyword id="KW-0433">Leucine-rich repeat</keyword>
<keyword id="KW-0498">Mitosis</keyword>
<keyword id="KW-0539">Nucleus</keyword>
<keyword id="KW-0597">Phosphoprotein</keyword>
<keyword id="KW-1185">Reference proteome</keyword>
<keyword id="KW-0677">Repeat</keyword>
<name>SDS22_YEAST</name>
<reference key="1">
    <citation type="journal article" date="1995" name="Mol. Cell. Biol.">
        <title>The Saccharomyces cerevisiae gene SDS22 encodes a potential regulator of the mitotic function of yeast type 1 protein phosphatase.</title>
        <authorList>
            <person name="Mackelvie S.H."/>
            <person name="Andrews P.D."/>
            <person name="Stark M.J.R."/>
        </authorList>
    </citation>
    <scope>NUCLEOTIDE SEQUENCE [GENOMIC DNA]</scope>
    <source>
        <strain>ATCC 200358 / YNN 295</strain>
    </source>
</reference>
<reference key="2">
    <citation type="journal article" date="1994" name="Nature">
        <title>Complete DNA sequence of yeast chromosome XI.</title>
        <authorList>
            <person name="Dujon B."/>
            <person name="Alexandraki D."/>
            <person name="Andre B."/>
            <person name="Ansorge W."/>
            <person name="Baladron V."/>
            <person name="Ballesta J.P.G."/>
            <person name="Banrevi A."/>
            <person name="Bolle P.-A."/>
            <person name="Bolotin-Fukuhara M."/>
            <person name="Bossier P."/>
            <person name="Bou G."/>
            <person name="Boyer J."/>
            <person name="Buitrago M.J."/>
            <person name="Cheret G."/>
            <person name="Colleaux L."/>
            <person name="Daignan-Fornier B."/>
            <person name="del Rey F."/>
            <person name="Dion C."/>
            <person name="Domdey H."/>
            <person name="Duesterhoeft A."/>
            <person name="Duesterhus S."/>
            <person name="Entian K.-D."/>
            <person name="Erfle H."/>
            <person name="Esteban P.F."/>
            <person name="Feldmann H."/>
            <person name="Fernandes L."/>
            <person name="Fobo G.M."/>
            <person name="Fritz C."/>
            <person name="Fukuhara H."/>
            <person name="Gabel C."/>
            <person name="Gaillon L."/>
            <person name="Garcia-Cantalejo J.M."/>
            <person name="Garcia-Ramirez J.J."/>
            <person name="Gent M.E."/>
            <person name="Ghazvini M."/>
            <person name="Goffeau A."/>
            <person name="Gonzalez A."/>
            <person name="Grothues D."/>
            <person name="Guerreiro P."/>
            <person name="Hegemann J.H."/>
            <person name="Hewitt N."/>
            <person name="Hilger F."/>
            <person name="Hollenberg C.P."/>
            <person name="Horaitis O."/>
            <person name="Indge K.J."/>
            <person name="Jacquier A."/>
            <person name="James C.M."/>
            <person name="Jauniaux J.-C."/>
            <person name="Jimenez A."/>
            <person name="Keuchel H."/>
            <person name="Kirchrath L."/>
            <person name="Kleine K."/>
            <person name="Koetter P."/>
            <person name="Legrain P."/>
            <person name="Liebl S."/>
            <person name="Louis E.J."/>
            <person name="Maia e Silva A."/>
            <person name="Marck C."/>
            <person name="Monnier A.-L."/>
            <person name="Moestl D."/>
            <person name="Mueller S."/>
            <person name="Obermaier B."/>
            <person name="Oliver S.G."/>
            <person name="Pallier C."/>
            <person name="Pascolo S."/>
            <person name="Pfeiffer F."/>
            <person name="Philippsen P."/>
            <person name="Planta R.J."/>
            <person name="Pohl F.M."/>
            <person name="Pohl T.M."/>
            <person name="Poehlmann R."/>
            <person name="Portetelle D."/>
            <person name="Purnelle B."/>
            <person name="Puzos V."/>
            <person name="Ramezani Rad M."/>
            <person name="Rasmussen S.W."/>
            <person name="Remacha M.A."/>
            <person name="Revuelta J.L."/>
            <person name="Richard G.-F."/>
            <person name="Rieger M."/>
            <person name="Rodrigues-Pousada C."/>
            <person name="Rose M."/>
            <person name="Rupp T."/>
            <person name="Santos M.A."/>
            <person name="Schwager C."/>
            <person name="Sensen C."/>
            <person name="Skala J."/>
            <person name="Soares H."/>
            <person name="Sor F."/>
            <person name="Stegemann J."/>
            <person name="Tettelin H."/>
            <person name="Thierry A."/>
            <person name="Tzermia M."/>
            <person name="Urrestarazu L.A."/>
            <person name="van Dyck L."/>
            <person name="van Vliet-Reedijk J.C."/>
            <person name="Valens M."/>
            <person name="Vandenbol M."/>
            <person name="Vilela C."/>
            <person name="Vissers S."/>
            <person name="von Wettstein D."/>
            <person name="Voss H."/>
            <person name="Wiemann S."/>
            <person name="Xu G."/>
            <person name="Zimmermann J."/>
            <person name="Haasemann M."/>
            <person name="Becker I."/>
            <person name="Mewes H.-W."/>
        </authorList>
    </citation>
    <scope>NUCLEOTIDE SEQUENCE [LARGE SCALE GENOMIC DNA]</scope>
    <source>
        <strain>ATCC 204508 / S288c</strain>
    </source>
</reference>
<reference key="3">
    <citation type="journal article" date="2014" name="G3 (Bethesda)">
        <title>The reference genome sequence of Saccharomyces cerevisiae: Then and now.</title>
        <authorList>
            <person name="Engel S.R."/>
            <person name="Dietrich F.S."/>
            <person name="Fisk D.G."/>
            <person name="Binkley G."/>
            <person name="Balakrishnan R."/>
            <person name="Costanzo M.C."/>
            <person name="Dwight S.S."/>
            <person name="Hitz B.C."/>
            <person name="Karra K."/>
            <person name="Nash R.S."/>
            <person name="Weng S."/>
            <person name="Wong E.D."/>
            <person name="Lloyd P."/>
            <person name="Skrzypek M.S."/>
            <person name="Miyasato S.R."/>
            <person name="Simison M."/>
            <person name="Cherry J.M."/>
        </authorList>
    </citation>
    <scope>GENOME REANNOTATION</scope>
    <source>
        <strain>ATCC 204508 / S288c</strain>
    </source>
</reference>
<reference key="4">
    <citation type="journal article" date="2007" name="Genome Res.">
        <title>Approaching a complete repository of sequence-verified protein-encoding clones for Saccharomyces cerevisiae.</title>
        <authorList>
            <person name="Hu Y."/>
            <person name="Rolfs A."/>
            <person name="Bhullar B."/>
            <person name="Murthy T.V.S."/>
            <person name="Zhu C."/>
            <person name="Berger M.F."/>
            <person name="Camargo A.A."/>
            <person name="Kelley F."/>
            <person name="McCarron S."/>
            <person name="Jepson D."/>
            <person name="Richardson A."/>
            <person name="Raphael J."/>
            <person name="Moreira D."/>
            <person name="Taycher E."/>
            <person name="Zuo D."/>
            <person name="Mohr S."/>
            <person name="Kane M.F."/>
            <person name="Williamson J."/>
            <person name="Simpson A.J.G."/>
            <person name="Bulyk M.L."/>
            <person name="Harlow E."/>
            <person name="Marsischky G."/>
            <person name="Kolodner R.D."/>
            <person name="LaBaer J."/>
        </authorList>
    </citation>
    <scope>NUCLEOTIDE SEQUENCE [GENOMIC DNA]</scope>
    <source>
        <strain>ATCC 204508 / S288c</strain>
    </source>
</reference>
<reference key="5">
    <citation type="journal article" date="1993" name="Yeast">
        <title>DNA sequence analysis of the YCN2 region of chromosome XI in Saccharomyces cerevisiae.</title>
        <authorList>
            <person name="Cheret G."/>
            <person name="Mattheakis L.C."/>
            <person name="Sor F."/>
        </authorList>
    </citation>
    <scope>NUCLEOTIDE SEQUENCE [GENOMIC DNA] OF 1-136</scope>
    <source>
        <strain>S288c / GRF88</strain>
    </source>
</reference>
<reference key="6">
    <citation type="journal article" date="2003" name="Mol. Cell">
        <title>Assigning function to yeast proteins by integration of technologies.</title>
        <authorList>
            <person name="Hazbun T.R."/>
            <person name="Malmstroem L."/>
            <person name="Anderson S."/>
            <person name="Graczyk B.J."/>
            <person name="Fox B."/>
            <person name="Riffle M."/>
            <person name="Sundin B.A."/>
            <person name="Aranda J.D."/>
            <person name="McDonald W.H."/>
            <person name="Chiu C.-H."/>
            <person name="Snydsman B.E."/>
            <person name="Bradley P."/>
            <person name="Muller E.G.D."/>
            <person name="Fields S."/>
            <person name="Baker D."/>
            <person name="Yates J.R. III"/>
            <person name="Davis T.N."/>
        </authorList>
    </citation>
    <scope>IDENTIFICATION BY MASS SPECTROMETRY</scope>
    <scope>INTERACTION WITH YPI1</scope>
</reference>
<reference key="7">
    <citation type="journal article" date="2003" name="Nature">
        <title>Global analysis of protein expression in yeast.</title>
        <authorList>
            <person name="Ghaemmaghami S."/>
            <person name="Huh W.-K."/>
            <person name="Bower K."/>
            <person name="Howson R.W."/>
            <person name="Belle A."/>
            <person name="Dephoure N."/>
            <person name="O'Shea E.K."/>
            <person name="Weissman J.S."/>
        </authorList>
    </citation>
    <scope>LEVEL OF PROTEIN EXPRESSION [LARGE SCALE ANALYSIS]</scope>
</reference>
<reference key="8">
    <citation type="journal article" date="2008" name="Mol. Cell. Proteomics">
        <title>A multidimensional chromatography technology for in-depth phosphoproteome analysis.</title>
        <authorList>
            <person name="Albuquerque C.P."/>
            <person name="Smolka M.B."/>
            <person name="Payne S.H."/>
            <person name="Bafna V."/>
            <person name="Eng J."/>
            <person name="Zhou H."/>
        </authorList>
    </citation>
    <scope>PHOSPHORYLATION [LARGE SCALE ANALYSIS] AT SER-56</scope>
    <scope>IDENTIFICATION BY MASS SPECTROMETRY [LARGE SCALE ANALYSIS]</scope>
</reference>
<reference key="9">
    <citation type="journal article" date="2009" name="Science">
        <title>Global analysis of Cdk1 substrate phosphorylation sites provides insights into evolution.</title>
        <authorList>
            <person name="Holt L.J."/>
            <person name="Tuch B.B."/>
            <person name="Villen J."/>
            <person name="Johnson A.D."/>
            <person name="Gygi S.P."/>
            <person name="Morgan D.O."/>
        </authorList>
    </citation>
    <scope>PHOSPHORYLATION [LARGE SCALE ANALYSIS] AT SER-56</scope>
    <scope>IDENTIFICATION BY MASS SPECTROMETRY [LARGE SCALE ANALYSIS]</scope>
</reference>
<organism>
    <name type="scientific">Saccharomyces cerevisiae (strain ATCC 204508 / S288c)</name>
    <name type="common">Baker's yeast</name>
    <dbReference type="NCBI Taxonomy" id="559292"/>
    <lineage>
        <taxon>Eukaryota</taxon>
        <taxon>Fungi</taxon>
        <taxon>Dikarya</taxon>
        <taxon>Ascomycota</taxon>
        <taxon>Saccharomycotina</taxon>
        <taxon>Saccharomycetes</taxon>
        <taxon>Saccharomycetales</taxon>
        <taxon>Saccharomycetaceae</taxon>
        <taxon>Saccharomyces</taxon>
    </lineage>
</organism>
<evidence type="ECO:0000250" key="1"/>
<evidence type="ECO:0000269" key="2">
    <source>
    </source>
</evidence>
<evidence type="ECO:0000269" key="3">
    <source>
    </source>
</evidence>
<evidence type="ECO:0000305" key="4"/>
<evidence type="ECO:0007744" key="5">
    <source>
    </source>
</evidence>
<evidence type="ECO:0007744" key="6">
    <source>
    </source>
</evidence>